<evidence type="ECO:0000256" key="1">
    <source>
        <dbReference type="SAM" id="MobiDB-lite"/>
    </source>
</evidence>
<evidence type="ECO:0000303" key="2">
    <source>
    </source>
</evidence>
<evidence type="ECO:0000305" key="3"/>
<dbReference type="EMBL" id="AK024228">
    <property type="protein sequence ID" value="BAB14856.1"/>
    <property type="status" value="ALT_INIT"/>
    <property type="molecule type" value="mRNA"/>
</dbReference>
<dbReference type="EMBL" id="AK131381">
    <property type="protein sequence ID" value="BAD18532.1"/>
    <property type="molecule type" value="mRNA"/>
</dbReference>
<dbReference type="EMBL" id="BC013353">
    <property type="protein sequence ID" value="AAH13353.1"/>
    <property type="status" value="ALT_INIT"/>
    <property type="molecule type" value="mRNA"/>
</dbReference>
<dbReference type="EMBL" id="BC035871">
    <property type="protein sequence ID" value="AAH35871.3"/>
    <property type="molecule type" value="mRNA"/>
</dbReference>
<dbReference type="CCDS" id="CCDS4350.2">
    <molecule id="Q8IV13-1"/>
</dbReference>
<dbReference type="RefSeq" id="NP_001295102.1">
    <property type="nucleotide sequence ID" value="NM_001308173.1"/>
</dbReference>
<dbReference type="RefSeq" id="NP_078841.3">
    <molecule id="Q8IV13-1"/>
    <property type="nucleotide sequence ID" value="NM_024565.6"/>
</dbReference>
<dbReference type="RefSeq" id="XP_016865338.1">
    <property type="nucleotide sequence ID" value="XM_017009849.1"/>
</dbReference>
<dbReference type="SMR" id="Q8IV13"/>
<dbReference type="BioGRID" id="122749">
    <property type="interactions" value="46"/>
</dbReference>
<dbReference type="FunCoup" id="Q8IV13">
    <property type="interactions" value="591"/>
</dbReference>
<dbReference type="IntAct" id="Q8IV13">
    <property type="interactions" value="32"/>
</dbReference>
<dbReference type="STRING" id="9606.ENSP00000377547"/>
<dbReference type="GlyGen" id="Q8IV13">
    <property type="glycosylation" value="5 sites, 3 N-linked glycans (2 sites)"/>
</dbReference>
<dbReference type="iPTMnet" id="Q8IV13"/>
<dbReference type="PhosphoSitePlus" id="Q8IV13"/>
<dbReference type="BioMuta" id="CCNJL"/>
<dbReference type="DMDM" id="121946266"/>
<dbReference type="jPOST" id="Q8IV13"/>
<dbReference type="MassIVE" id="Q8IV13"/>
<dbReference type="PaxDb" id="9606-ENSP00000377547"/>
<dbReference type="PeptideAtlas" id="Q8IV13"/>
<dbReference type="ProteomicsDB" id="70641">
    <molecule id="Q8IV13-1"/>
</dbReference>
<dbReference type="ProteomicsDB" id="70642">
    <molecule id="Q8IV13-2"/>
</dbReference>
<dbReference type="Antibodypedia" id="45857">
    <property type="antibodies" value="113 antibodies from 18 providers"/>
</dbReference>
<dbReference type="DNASU" id="79616"/>
<dbReference type="Ensembl" id="ENST00000393977.7">
    <molecule id="Q8IV13-1"/>
    <property type="protein sequence ID" value="ENSP00000377547.3"/>
    <property type="gene ID" value="ENSG00000135083.17"/>
</dbReference>
<dbReference type="GeneID" id="79616"/>
<dbReference type="KEGG" id="hsa:79616"/>
<dbReference type="UCSC" id="uc003lyb.2">
    <molecule id="Q8IV13-1"/>
    <property type="organism name" value="human"/>
</dbReference>
<dbReference type="AGR" id="HGNC:25876"/>
<dbReference type="CTD" id="79616"/>
<dbReference type="DisGeNET" id="79616"/>
<dbReference type="GeneCards" id="CCNJL"/>
<dbReference type="HGNC" id="HGNC:25876">
    <property type="gene designation" value="CCNJL"/>
</dbReference>
<dbReference type="HPA" id="ENSG00000135083">
    <property type="expression patterns" value="Tissue enhanced (brain)"/>
</dbReference>
<dbReference type="neXtProt" id="NX_Q8IV13"/>
<dbReference type="OpenTargets" id="ENSG00000135083"/>
<dbReference type="PharmGKB" id="PA144596449"/>
<dbReference type="VEuPathDB" id="HostDB:ENSG00000135083"/>
<dbReference type="eggNOG" id="KOG0654">
    <property type="taxonomic scope" value="Eukaryota"/>
</dbReference>
<dbReference type="GeneTree" id="ENSGT00940000159349"/>
<dbReference type="InParanoid" id="Q8IV13"/>
<dbReference type="OrthoDB" id="285802at2759"/>
<dbReference type="PAN-GO" id="Q8IV13">
    <property type="GO annotations" value="7 GO annotations based on evolutionary models"/>
</dbReference>
<dbReference type="PhylomeDB" id="Q8IV13"/>
<dbReference type="TreeFam" id="TF101009"/>
<dbReference type="PathwayCommons" id="Q8IV13"/>
<dbReference type="SignaLink" id="Q8IV13"/>
<dbReference type="BioGRID-ORCS" id="79616">
    <property type="hits" value="10 hits in 1151 CRISPR screens"/>
</dbReference>
<dbReference type="ChiTaRS" id="CCNJL">
    <property type="organism name" value="human"/>
</dbReference>
<dbReference type="GenomeRNAi" id="79616"/>
<dbReference type="Pharos" id="Q8IV13">
    <property type="development level" value="Tdark"/>
</dbReference>
<dbReference type="PRO" id="PR:Q8IV13"/>
<dbReference type="Proteomes" id="UP000005640">
    <property type="component" value="Chromosome 5"/>
</dbReference>
<dbReference type="RNAct" id="Q8IV13">
    <property type="molecule type" value="protein"/>
</dbReference>
<dbReference type="Bgee" id="ENSG00000135083">
    <property type="expression patterns" value="Expressed in blood and 104 other cell types or tissues"/>
</dbReference>
<dbReference type="ExpressionAtlas" id="Q8IV13">
    <property type="expression patterns" value="baseline and differential"/>
</dbReference>
<dbReference type="GO" id="GO:0000307">
    <property type="term" value="C:cyclin-dependent protein kinase holoenzyme complex"/>
    <property type="evidence" value="ECO:0000318"/>
    <property type="project" value="GO_Central"/>
</dbReference>
<dbReference type="GO" id="GO:0005737">
    <property type="term" value="C:cytoplasm"/>
    <property type="evidence" value="ECO:0000318"/>
    <property type="project" value="GO_Central"/>
</dbReference>
<dbReference type="GO" id="GO:0005815">
    <property type="term" value="C:microtubule organizing center"/>
    <property type="evidence" value="ECO:0000318"/>
    <property type="project" value="GO_Central"/>
</dbReference>
<dbReference type="GO" id="GO:0005634">
    <property type="term" value="C:nucleus"/>
    <property type="evidence" value="ECO:0000318"/>
    <property type="project" value="GO_Central"/>
</dbReference>
<dbReference type="GO" id="GO:0016538">
    <property type="term" value="F:cyclin-dependent protein serine/threonine kinase regulator activity"/>
    <property type="evidence" value="ECO:0000318"/>
    <property type="project" value="GO_Central"/>
</dbReference>
<dbReference type="GO" id="GO:0000082">
    <property type="term" value="P:G1/S transition of mitotic cell cycle"/>
    <property type="evidence" value="ECO:0000318"/>
    <property type="project" value="GO_Central"/>
</dbReference>
<dbReference type="CDD" id="cd20529">
    <property type="entry name" value="CYCLIN_CCNJ-like_rpt2"/>
    <property type="match status" value="1"/>
</dbReference>
<dbReference type="FunFam" id="1.10.472.10:FF:000047">
    <property type="entry name" value="Cyclin J like"/>
    <property type="match status" value="1"/>
</dbReference>
<dbReference type="Gene3D" id="1.10.472.10">
    <property type="entry name" value="Cyclin-like"/>
    <property type="match status" value="2"/>
</dbReference>
<dbReference type="InterPro" id="IPR039361">
    <property type="entry name" value="Cyclin"/>
</dbReference>
<dbReference type="InterPro" id="IPR013763">
    <property type="entry name" value="Cyclin-like_dom"/>
</dbReference>
<dbReference type="InterPro" id="IPR036915">
    <property type="entry name" value="Cyclin-like_sf"/>
</dbReference>
<dbReference type="InterPro" id="IPR004367">
    <property type="entry name" value="Cyclin_C-dom"/>
</dbReference>
<dbReference type="InterPro" id="IPR006671">
    <property type="entry name" value="Cyclin_N"/>
</dbReference>
<dbReference type="PANTHER" id="PTHR10177">
    <property type="entry name" value="CYCLINS"/>
    <property type="match status" value="1"/>
</dbReference>
<dbReference type="Pfam" id="PF02984">
    <property type="entry name" value="Cyclin_C"/>
    <property type="match status" value="1"/>
</dbReference>
<dbReference type="Pfam" id="PF00134">
    <property type="entry name" value="Cyclin_N"/>
    <property type="match status" value="1"/>
</dbReference>
<dbReference type="SMART" id="SM00385">
    <property type="entry name" value="CYCLIN"/>
    <property type="match status" value="2"/>
</dbReference>
<dbReference type="SMART" id="SM01332">
    <property type="entry name" value="Cyclin_C"/>
    <property type="match status" value="1"/>
</dbReference>
<dbReference type="SUPFAM" id="SSF47954">
    <property type="entry name" value="Cyclin-like"/>
    <property type="match status" value="2"/>
</dbReference>
<protein>
    <recommendedName>
        <fullName>Cyclin-J-like protein</fullName>
    </recommendedName>
</protein>
<reference key="1">
    <citation type="journal article" date="2004" name="Nat. Genet.">
        <title>Complete sequencing and characterization of 21,243 full-length human cDNAs.</title>
        <authorList>
            <person name="Ota T."/>
            <person name="Suzuki Y."/>
            <person name="Nishikawa T."/>
            <person name="Otsuki T."/>
            <person name="Sugiyama T."/>
            <person name="Irie R."/>
            <person name="Wakamatsu A."/>
            <person name="Hayashi K."/>
            <person name="Sato H."/>
            <person name="Nagai K."/>
            <person name="Kimura K."/>
            <person name="Makita H."/>
            <person name="Sekine M."/>
            <person name="Obayashi M."/>
            <person name="Nishi T."/>
            <person name="Shibahara T."/>
            <person name="Tanaka T."/>
            <person name="Ishii S."/>
            <person name="Yamamoto J."/>
            <person name="Saito K."/>
            <person name="Kawai Y."/>
            <person name="Isono Y."/>
            <person name="Nakamura Y."/>
            <person name="Nagahari K."/>
            <person name="Murakami K."/>
            <person name="Yasuda T."/>
            <person name="Iwayanagi T."/>
            <person name="Wagatsuma M."/>
            <person name="Shiratori A."/>
            <person name="Sudo H."/>
            <person name="Hosoiri T."/>
            <person name="Kaku Y."/>
            <person name="Kodaira H."/>
            <person name="Kondo H."/>
            <person name="Sugawara M."/>
            <person name="Takahashi M."/>
            <person name="Kanda K."/>
            <person name="Yokoi T."/>
            <person name="Furuya T."/>
            <person name="Kikkawa E."/>
            <person name="Omura Y."/>
            <person name="Abe K."/>
            <person name="Kamihara K."/>
            <person name="Katsuta N."/>
            <person name="Sato K."/>
            <person name="Tanikawa M."/>
            <person name="Yamazaki M."/>
            <person name="Ninomiya K."/>
            <person name="Ishibashi T."/>
            <person name="Yamashita H."/>
            <person name="Murakawa K."/>
            <person name="Fujimori K."/>
            <person name="Tanai H."/>
            <person name="Kimata M."/>
            <person name="Watanabe M."/>
            <person name="Hiraoka S."/>
            <person name="Chiba Y."/>
            <person name="Ishida S."/>
            <person name="Ono Y."/>
            <person name="Takiguchi S."/>
            <person name="Watanabe S."/>
            <person name="Yosida M."/>
            <person name="Hotuta T."/>
            <person name="Kusano J."/>
            <person name="Kanehori K."/>
            <person name="Takahashi-Fujii A."/>
            <person name="Hara H."/>
            <person name="Tanase T.-O."/>
            <person name="Nomura Y."/>
            <person name="Togiya S."/>
            <person name="Komai F."/>
            <person name="Hara R."/>
            <person name="Takeuchi K."/>
            <person name="Arita M."/>
            <person name="Imose N."/>
            <person name="Musashino K."/>
            <person name="Yuuki H."/>
            <person name="Oshima A."/>
            <person name="Sasaki N."/>
            <person name="Aotsuka S."/>
            <person name="Yoshikawa Y."/>
            <person name="Matsunawa H."/>
            <person name="Ichihara T."/>
            <person name="Shiohata N."/>
            <person name="Sano S."/>
            <person name="Moriya S."/>
            <person name="Momiyama H."/>
            <person name="Satoh N."/>
            <person name="Takami S."/>
            <person name="Terashima Y."/>
            <person name="Suzuki O."/>
            <person name="Nakagawa S."/>
            <person name="Senoh A."/>
            <person name="Mizoguchi H."/>
            <person name="Goto Y."/>
            <person name="Shimizu F."/>
            <person name="Wakebe H."/>
            <person name="Hishigaki H."/>
            <person name="Watanabe T."/>
            <person name="Sugiyama A."/>
            <person name="Takemoto M."/>
            <person name="Kawakami B."/>
            <person name="Yamazaki M."/>
            <person name="Watanabe K."/>
            <person name="Kumagai A."/>
            <person name="Itakura S."/>
            <person name="Fukuzumi Y."/>
            <person name="Fujimori Y."/>
            <person name="Komiyama M."/>
            <person name="Tashiro H."/>
            <person name="Tanigami A."/>
            <person name="Fujiwara T."/>
            <person name="Ono T."/>
            <person name="Yamada K."/>
            <person name="Fujii Y."/>
            <person name="Ozaki K."/>
            <person name="Hirao M."/>
            <person name="Ohmori Y."/>
            <person name="Kawabata A."/>
            <person name="Hikiji T."/>
            <person name="Kobatake N."/>
            <person name="Inagaki H."/>
            <person name="Ikema Y."/>
            <person name="Okamoto S."/>
            <person name="Okitani R."/>
            <person name="Kawakami T."/>
            <person name="Noguchi S."/>
            <person name="Itoh T."/>
            <person name="Shigeta K."/>
            <person name="Senba T."/>
            <person name="Matsumura K."/>
            <person name="Nakajima Y."/>
            <person name="Mizuno T."/>
            <person name="Morinaga M."/>
            <person name="Sasaki M."/>
            <person name="Togashi T."/>
            <person name="Oyama M."/>
            <person name="Hata H."/>
            <person name="Watanabe M."/>
            <person name="Komatsu T."/>
            <person name="Mizushima-Sugano J."/>
            <person name="Satoh T."/>
            <person name="Shirai Y."/>
            <person name="Takahashi Y."/>
            <person name="Nakagawa K."/>
            <person name="Okumura K."/>
            <person name="Nagase T."/>
            <person name="Nomura N."/>
            <person name="Kikuchi H."/>
            <person name="Masuho Y."/>
            <person name="Yamashita R."/>
            <person name="Nakai K."/>
            <person name="Yada T."/>
            <person name="Nakamura Y."/>
            <person name="Ohara O."/>
            <person name="Isogai T."/>
            <person name="Sugano S."/>
        </authorList>
    </citation>
    <scope>NUCLEOTIDE SEQUENCE [LARGE SCALE MRNA] (ISOFORM 2)</scope>
    <scope>NUCLEOTIDE SEQUENCE [LARGE SCALE MRNA] OF 248-435 (ISOFORM 1)</scope>
    <source>
        <tissue>Brain</tissue>
        <tissue>Embryo</tissue>
    </source>
</reference>
<reference key="2">
    <citation type="journal article" date="2004" name="Genome Res.">
        <title>The status, quality, and expansion of the NIH full-length cDNA project: the Mammalian Gene Collection (MGC).</title>
        <authorList>
            <consortium name="The MGC Project Team"/>
        </authorList>
    </citation>
    <scope>NUCLEOTIDE SEQUENCE [LARGE SCALE MRNA] (ISOFORM 1)</scope>
    <source>
        <tissue>Brain</tissue>
        <tissue>Lung</tissue>
    </source>
</reference>
<feature type="chain" id="PRO_0000309319" description="Cyclin-J-like protein">
    <location>
        <begin position="1"/>
        <end position="435"/>
    </location>
</feature>
<feature type="domain" description="Cyclin N-terminal">
    <location>
        <begin position="14"/>
        <end position="191"/>
    </location>
</feature>
<feature type="region of interest" description="Disordered" evidence="1">
    <location>
        <begin position="120"/>
        <end position="142"/>
    </location>
</feature>
<feature type="splice variant" id="VSP_029130" description="In isoform 2." evidence="2">
    <original>MMDEPWWEGRVASDVHCTLREKE</original>
    <variation>MRHTSKRKPQYYEAEMVLKYYKHLEEGSVSLCCPGWSAVAQSRLTAASTFGAQVILLFQLSEQLRLQE</variation>
    <location>
        <begin position="1"/>
        <end position="23"/>
    </location>
</feature>
<feature type="splice variant" id="VSP_029131" description="In isoform 2." evidence="2">
    <original>NGVSLLSPRLKCSGMISAHCNLHLPGSS</original>
    <variation>SRNKGSGSPVPTRSAQQCRQTWARGSPW</variation>
    <location>
        <begin position="94"/>
        <end position="121"/>
    </location>
</feature>
<feature type="splice variant" id="VSP_029132" description="In isoform 2." evidence="2">
    <location>
        <begin position="122"/>
        <end position="435"/>
    </location>
</feature>
<feature type="sequence variant" id="VAR_053053" description="In dbSNP:rs13362036.">
    <original>H</original>
    <variation>Y</variation>
    <location>
        <position position="234"/>
    </location>
</feature>
<keyword id="KW-0025">Alternative splicing</keyword>
<keyword id="KW-0195">Cyclin</keyword>
<keyword id="KW-1267">Proteomics identification</keyword>
<keyword id="KW-1185">Reference proteome</keyword>
<organism>
    <name type="scientific">Homo sapiens</name>
    <name type="common">Human</name>
    <dbReference type="NCBI Taxonomy" id="9606"/>
    <lineage>
        <taxon>Eukaryota</taxon>
        <taxon>Metazoa</taxon>
        <taxon>Chordata</taxon>
        <taxon>Craniata</taxon>
        <taxon>Vertebrata</taxon>
        <taxon>Euteleostomi</taxon>
        <taxon>Mammalia</taxon>
        <taxon>Eutheria</taxon>
        <taxon>Euarchontoglires</taxon>
        <taxon>Primates</taxon>
        <taxon>Haplorrhini</taxon>
        <taxon>Catarrhini</taxon>
        <taxon>Hominidae</taxon>
        <taxon>Homo</taxon>
    </lineage>
</organism>
<comment type="interaction">
    <interactant intactId="EBI-21668062">
        <id>Q8IV13</id>
    </interactant>
    <interactant intactId="EBI-946029">
        <id>Q6P1W5</id>
        <label>C1orf94</label>
    </interactant>
    <organismsDiffer>false</organismsDiffer>
    <experiments>3</experiments>
</comment>
<comment type="interaction">
    <interactant intactId="EBI-21668062">
        <id>Q8IV13</id>
    </interactant>
    <interactant intactId="EBI-10171774">
        <id>P60410</id>
        <label>KRTAP10-8</label>
    </interactant>
    <organismsDiffer>false</organismsDiffer>
    <experiments>4</experiments>
</comment>
<comment type="interaction">
    <interactant intactId="EBI-21668062">
        <id>Q8IV13</id>
    </interactant>
    <interactant intactId="EBI-3957672">
        <id>Q6PEX3</id>
        <label>KRTAP26-1</label>
    </interactant>
    <organismsDiffer>false</organismsDiffer>
    <experiments>4</experiments>
</comment>
<comment type="interaction">
    <interactant intactId="EBI-21668062">
        <id>Q8IV13</id>
    </interactant>
    <interactant intactId="EBI-602382">
        <id>Q16512</id>
        <label>PKN1</label>
    </interactant>
    <organismsDiffer>false</organismsDiffer>
    <experiments>3</experiments>
</comment>
<comment type="interaction">
    <interactant intactId="EBI-21668062">
        <id>Q8IV13</id>
    </interactant>
    <interactant intactId="EBI-307352">
        <id>Q04864</id>
        <label>REL</label>
    </interactant>
    <organismsDiffer>false</organismsDiffer>
    <experiments>3</experiments>
</comment>
<comment type="interaction">
    <interactant intactId="EBI-21668062">
        <id>Q8IV13</id>
    </interactant>
    <interactant intactId="EBI-717810">
        <id>Q08117</id>
        <label>TLE5</label>
    </interactant>
    <organismsDiffer>false</organismsDiffer>
    <experiments>3</experiments>
</comment>
<comment type="interaction">
    <interactant intactId="EBI-21668062">
        <id>Q8IV13</id>
    </interactant>
    <interactant intactId="EBI-355744">
        <id>Q12933</id>
        <label>TRAF2</label>
    </interactant>
    <organismsDiffer>false</organismsDiffer>
    <experiments>3</experiments>
</comment>
<comment type="interaction">
    <interactant intactId="EBI-21668062">
        <id>Q8IV13</id>
    </interactant>
    <interactant intactId="EBI-1052596">
        <id>P31930</id>
        <label>UQCRC1</label>
    </interactant>
    <organismsDiffer>false</organismsDiffer>
    <experiments>3</experiments>
</comment>
<comment type="alternative products">
    <event type="alternative splicing"/>
    <isoform>
        <id>Q8IV13-1</id>
        <name>1</name>
        <sequence type="displayed"/>
    </isoform>
    <isoform>
        <id>Q8IV13-2</id>
        <name>2</name>
        <sequence type="described" ref="VSP_029130 VSP_029131 VSP_029132"/>
    </isoform>
</comment>
<comment type="similarity">
    <text evidence="3">Belongs to the cyclin family. Cyclin J subfamily.</text>
</comment>
<comment type="caution">
    <text evidence="3">It is uncertain whether Met-1 or Met-2 is the initiator.</text>
</comment>
<comment type="sequence caution" evidence="3">
    <conflict type="erroneous initiation">
        <sequence resource="EMBL-CDS" id="AAH13353"/>
    </conflict>
</comment>
<comment type="sequence caution" evidence="3">
    <conflict type="erroneous initiation">
        <sequence resource="EMBL-CDS" id="BAB14856"/>
    </conflict>
</comment>
<sequence>MMDEPWWEGRVASDVHCTLREKELKLPTFRAHSPLLKSRRFFVDILTLLSSHCQLCPAARHLAVYLLDHFMDRYNVTTSKQLYTVAVSCLLLANGVSLLSPRLKCSGMISAHCNLHLPGSSNSPASAPHPPPTPPQVAETTGKFEDREDHVPKLEQINSTRILSSQNFTLTKKELLSTELLLLEAFSWNLCLPTPAHFLDYYLLASVSQKDHHCHTWPTTCPRKTKECLKEYAHYFLEVTLQDHIFYKFQPSVVAAACVGASRICLQLSPYWTRDLQRISSYSLEHLSTCIEILLVVYDNVLKDAVAVKSQALAMVPGTPPTPTQVLFQPPAYPALGQPATTLAQFQTPVQDLCLAYRDSLQAHRSGSLLSGSTGSSLHTPYQPLQPLDMCPVPVPASLSMHMAIAAEPRHCLATTYGSSYFSGSHMFPTGCFDR</sequence>
<accession>Q8IV13</accession>
<accession>Q6ZN43</accession>
<accession>Q9H7W8</accession>
<proteinExistence type="evidence at protein level"/>
<gene>
    <name type="primary">CCNJL</name>
</gene>
<name>CCNJL_HUMAN</name>